<protein>
    <recommendedName>
        <fullName evidence="4">FLYWCH transcription factor 3</fullName>
    </recommendedName>
</protein>
<keyword id="KW-0479">Metal-binding</keyword>
<keyword id="KW-1185">Reference proteome</keyword>
<keyword id="KW-0862">Zinc</keyword>
<keyword id="KW-0863">Zinc-finger</keyword>
<dbReference type="EMBL" id="BX284604">
    <property type="protein sequence ID" value="CAA21592.2"/>
    <property type="molecule type" value="Genomic_DNA"/>
</dbReference>
<dbReference type="PIR" id="T26471">
    <property type="entry name" value="T26471"/>
</dbReference>
<dbReference type="RefSeq" id="NP_501619.2">
    <property type="nucleotide sequence ID" value="NM_069218.3"/>
</dbReference>
<dbReference type="FunCoup" id="Q9XWQ6">
    <property type="interactions" value="1197"/>
</dbReference>
<dbReference type="IntAct" id="Q9XWQ6">
    <property type="interactions" value="7"/>
</dbReference>
<dbReference type="STRING" id="6239.Y11D7A.13.1"/>
<dbReference type="PaxDb" id="6239-Y11D7A.13"/>
<dbReference type="PeptideAtlas" id="Q9XWQ6"/>
<dbReference type="EnsemblMetazoa" id="Y11D7A.13.1">
    <property type="protein sequence ID" value="Y11D7A.13.1"/>
    <property type="gene ID" value="WBGene00012436"/>
</dbReference>
<dbReference type="GeneID" id="189435"/>
<dbReference type="KEGG" id="cel:CELE_Y11D7A.13"/>
<dbReference type="UCSC" id="Y11D7A.13">
    <property type="organism name" value="c. elegans"/>
</dbReference>
<dbReference type="AGR" id="WB:WBGene00012436"/>
<dbReference type="CTD" id="189435"/>
<dbReference type="WormBase" id="Y11D7A.13">
    <property type="protein sequence ID" value="CE35649"/>
    <property type="gene ID" value="WBGene00012436"/>
    <property type="gene designation" value="flh-3"/>
</dbReference>
<dbReference type="eggNOG" id="ENOG502TGFQ">
    <property type="taxonomic scope" value="Eukaryota"/>
</dbReference>
<dbReference type="GeneTree" id="ENSGT00970000196226"/>
<dbReference type="HOGENOM" id="CLU_654235_0_0_1"/>
<dbReference type="InParanoid" id="Q9XWQ6"/>
<dbReference type="OMA" id="RCERKNT"/>
<dbReference type="OrthoDB" id="5814046at2759"/>
<dbReference type="PhylomeDB" id="Q9XWQ6"/>
<dbReference type="PRO" id="PR:Q9XWQ6"/>
<dbReference type="Proteomes" id="UP000001940">
    <property type="component" value="Chromosome IV"/>
</dbReference>
<dbReference type="Bgee" id="WBGene00012436">
    <property type="expression patterns" value="Expressed in embryo and 4 other cell types or tissues"/>
</dbReference>
<dbReference type="GO" id="GO:0003700">
    <property type="term" value="F:DNA-binding transcription factor activity"/>
    <property type="evidence" value="ECO:0000318"/>
    <property type="project" value="GO_Central"/>
</dbReference>
<dbReference type="GO" id="GO:0043565">
    <property type="term" value="F:sequence-specific DNA binding"/>
    <property type="evidence" value="ECO:0000318"/>
    <property type="project" value="GO_Central"/>
</dbReference>
<dbReference type="GO" id="GO:0008270">
    <property type="term" value="F:zinc ion binding"/>
    <property type="evidence" value="ECO:0007669"/>
    <property type="project" value="UniProtKB-KW"/>
</dbReference>
<dbReference type="GO" id="GO:0045892">
    <property type="term" value="P:negative regulation of DNA-templated transcription"/>
    <property type="evidence" value="ECO:0000316"/>
    <property type="project" value="WormBase"/>
</dbReference>
<dbReference type="Gene3D" id="2.20.25.240">
    <property type="match status" value="1"/>
</dbReference>
<dbReference type="InterPro" id="IPR052887">
    <property type="entry name" value="FLYWCH-type_ZF"/>
</dbReference>
<dbReference type="InterPro" id="IPR007588">
    <property type="entry name" value="Znf_FLYWCH"/>
</dbReference>
<dbReference type="PANTHER" id="PTHR37975:SF3">
    <property type="entry name" value="FLYWCH TRANSCRIPTION FACTOR 3"/>
    <property type="match status" value="1"/>
</dbReference>
<dbReference type="PANTHER" id="PTHR37975">
    <property type="entry name" value="FLYWCH ZINC FINGER TRANSCRIPTION FACTOR HOMOLOG"/>
    <property type="match status" value="1"/>
</dbReference>
<dbReference type="Pfam" id="PF04500">
    <property type="entry name" value="FLYWCH"/>
    <property type="match status" value="1"/>
</dbReference>
<feature type="chain" id="PRO_0000453577" description="FLYWCH transcription factor 3">
    <location>
        <begin position="1"/>
        <end position="420"/>
    </location>
</feature>
<feature type="zinc finger region" description="FLYWCH-type" evidence="1">
    <location>
        <begin position="140"/>
        <end position="195"/>
    </location>
</feature>
<feature type="region of interest" description="Disordered" evidence="2">
    <location>
        <begin position="87"/>
        <end position="107"/>
    </location>
</feature>
<feature type="region of interest" description="Disordered" evidence="2">
    <location>
        <begin position="119"/>
        <end position="138"/>
    </location>
</feature>
<feature type="compositionally biased region" description="Low complexity" evidence="2">
    <location>
        <begin position="87"/>
        <end position="104"/>
    </location>
</feature>
<feature type="compositionally biased region" description="Polar residues" evidence="2">
    <location>
        <begin position="123"/>
        <end position="134"/>
    </location>
</feature>
<evidence type="ECO:0000255" key="1"/>
<evidence type="ECO:0000256" key="2">
    <source>
        <dbReference type="SAM" id="MobiDB-lite"/>
    </source>
</evidence>
<evidence type="ECO:0000269" key="3">
    <source>
    </source>
</evidence>
<evidence type="ECO:0000303" key="4">
    <source>
    </source>
</evidence>
<evidence type="ECO:0000305" key="5"/>
<evidence type="ECO:0000312" key="6">
    <source>
        <dbReference type="Proteomes" id="UP000001940"/>
    </source>
</evidence>
<evidence type="ECO:0000312" key="7">
    <source>
        <dbReference type="WormBase" id="Y11D7A.13"/>
    </source>
</evidence>
<organism evidence="6">
    <name type="scientific">Caenorhabditis elegans</name>
    <dbReference type="NCBI Taxonomy" id="6239"/>
    <lineage>
        <taxon>Eukaryota</taxon>
        <taxon>Metazoa</taxon>
        <taxon>Ecdysozoa</taxon>
        <taxon>Nematoda</taxon>
        <taxon>Chromadorea</taxon>
        <taxon>Rhabditida</taxon>
        <taxon>Rhabditina</taxon>
        <taxon>Rhabditomorpha</taxon>
        <taxon>Rhabditoidea</taxon>
        <taxon>Rhabditidae</taxon>
        <taxon>Peloderinae</taxon>
        <taxon>Caenorhabditis</taxon>
    </lineage>
</organism>
<accession>Q9XWQ6</accession>
<proteinExistence type="evidence at transcript level"/>
<gene>
    <name evidence="7" type="primary">flh-3</name>
    <name evidence="7" type="ORF">Y11D7A.13</name>
</gene>
<name>FLH3_CAEEL</name>
<comment type="function">
    <text evidence="3">Probable transcription factor (PubMed:18794349). May bind to the promoters of target genes, including micro-RNA genes, in order to repress expression, and acting redundantly with flh-2 (PubMed:18794349).</text>
</comment>
<comment type="developmental stage">
    <text evidence="3">Expressed during late stages of embryogenesis and larval L1 stage.</text>
</comment>
<reference evidence="6" key="1">
    <citation type="journal article" date="1998" name="Science">
        <title>Genome sequence of the nematode C. elegans: a platform for investigating biology.</title>
        <authorList>
            <consortium name="The C. elegans sequencing consortium"/>
        </authorList>
    </citation>
    <scope>NUCLEOTIDE SEQUENCE [LARGE SCALE GENOMIC DNA]</scope>
    <source>
        <strain evidence="6">Bristol N2</strain>
    </source>
</reference>
<reference evidence="5" key="2">
    <citation type="journal article" date="2008" name="Genes Dev.">
        <title>The FLYWCH transcription factors FLH-1, FLH-2, and FLH-3 repress embryonic expression of microRNA genes in C. elegans.</title>
        <authorList>
            <person name="Ow M.C."/>
            <person name="Martinez N.J."/>
            <person name="Olsen P.H."/>
            <person name="Silverman H.S."/>
            <person name="Barrasa M.I."/>
            <person name="Conradt B."/>
            <person name="Walhout A.J."/>
            <person name="Ambros V."/>
        </authorList>
    </citation>
    <scope>FUNCTION</scope>
    <scope>DEVELOPMENTAL STAGE</scope>
</reference>
<sequence length="420" mass="48264">MNLASQISQAKTGNATMEWAKNYVSKLNDGQLALLQKMYADHQAKLKASEDEKKKKEMEELKMKAQQQAILDSLTQQIPIMVDVLRSSTSPDSQPSSSSSVMSSTDEDQITVKDVLIGKINKAQRQSSPNSSKPYTPRGIRERVLFDEHLYVFDKCSYDSKKRFFRCERKNTCPARIHTPFDAERVIHKVQVHNHPPPTTFDLAHYNIDYGKVKSGHILSLNGPQQTKNLLPPSLLTPKSDLEDETLSTKTEQKNASTMNILLSMTNNCDGRKPITLRLPDLFNKISEMEIHDMEMTLTKFLLENRELRTDLISRNGDLPVFFPNAHNDELVLFVADQHENDSVFQMIRVSERNEKSIRQAIQEHLQKVSNRSLMMNISSKINVPLSQQMIDQWRTEEFIRLDSSKPNFWKIHHVSKLQD</sequence>